<gene>
    <name evidence="4" type="primary">J2</name>
    <name evidence="6" type="synonym">EBI</name>
    <name type="ordered locus">Solyc12g038510</name>
</gene>
<proteinExistence type="evidence at protein level"/>
<protein>
    <recommendedName>
        <fullName evidence="5">MADS-box protein J2</fullName>
    </recommendedName>
    <alternativeName>
        <fullName evidence="6">MADS-box protein EBI</fullName>
    </alternativeName>
    <alternativeName>
        <fullName evidence="6">Protein EXTREME BRANCHED INFLORESCENCE</fullName>
    </alternativeName>
    <alternativeName>
        <fullName evidence="4">Protein JOINTLESS-2</fullName>
    </alternativeName>
</protein>
<comment type="function">
    <text evidence="3">MADS-box transcription factor that acts redundantly with EJ2 to control meristem maturation and inflorescence architecture.</text>
</comment>
<comment type="subcellular location">
    <subcellularLocation>
        <location evidence="1">Nucleus</location>
    </subcellularLocation>
</comment>
<comment type="biotechnology">
    <text evidence="3">Combining natural and engineered alleles of J2 and EJ2 provide a wide range of inflorescence complexity that allows breeding of higher yielding hybrids.</text>
</comment>
<feature type="chain" id="PRO_0000441032" description="MADS-box protein J2">
    <location>
        <begin position="1"/>
        <end position="250"/>
    </location>
</feature>
<feature type="domain" description="MADS-box" evidence="1">
    <location>
        <begin position="1"/>
        <end position="61"/>
    </location>
</feature>
<feature type="domain" description="K-box" evidence="2">
    <location>
        <begin position="87"/>
        <end position="177"/>
    </location>
</feature>
<sequence length="250" mass="28442">MGRGRVELKRIENKINRQVTFAKRRNGLLKKAYELSILCDAEVALIIFSSRGKLYEFSSASSMMTTLEKYQQCSYASLDPMLPVSDTQMNYNEYVRLKARVELLQRSQRHILGEDLGTLNSKELEQLEHQLDASLKKVRSKKTQSMLDQLADLQEKEQMLEEANKQLKNKLEESAARIPLGLSWGNNGGQTMEYNRLPPQTTAQPFFQPLRLNSSSPQFGYNPNMGANDHEVNAATTAHNINGFIPGWML</sequence>
<organism>
    <name type="scientific">Solanum lycopersicum</name>
    <name type="common">Tomato</name>
    <name type="synonym">Lycopersicon esculentum</name>
    <dbReference type="NCBI Taxonomy" id="4081"/>
    <lineage>
        <taxon>Eukaryota</taxon>
        <taxon>Viridiplantae</taxon>
        <taxon>Streptophyta</taxon>
        <taxon>Embryophyta</taxon>
        <taxon>Tracheophyta</taxon>
        <taxon>Spermatophyta</taxon>
        <taxon>Magnoliopsida</taxon>
        <taxon>eudicotyledons</taxon>
        <taxon>Gunneridae</taxon>
        <taxon>Pentapetalae</taxon>
        <taxon>asterids</taxon>
        <taxon>lamiids</taxon>
        <taxon>Solanales</taxon>
        <taxon>Solanaceae</taxon>
        <taxon>Solanoideae</taxon>
        <taxon>Solaneae</taxon>
        <taxon>Solanum</taxon>
        <taxon>Solanum subgen. Lycopersicon</taxon>
    </lineage>
</organism>
<reference key="1">
    <citation type="submission" date="2013-09" db="EMBL/GenBank/DDBJ databases">
        <title>Cloning and expression analysis of a MADS-box gene in tomato.</title>
        <authorList>
            <person name="Dong T."/>
        </authorList>
    </citation>
    <scope>NUCLEOTIDE SEQUENCE [MRNA]</scope>
    <source>
        <strain>cv. Ailsa Craig</strain>
    </source>
</reference>
<reference key="2">
    <citation type="journal article" date="2012" name="Nature">
        <title>The tomato genome sequence provides insights into fleshy fruit evolution.</title>
        <authorList>
            <consortium name="Tomato Genome Consortium"/>
        </authorList>
    </citation>
    <scope>NUCLEOTIDE SEQUENCE [LARGE SCALE GENOMIC DNA]</scope>
    <source>
        <strain>cv. Heinz 1706</strain>
    </source>
</reference>
<reference key="3">
    <citation type="journal article" date="2017" name="Cell">
        <title>Bypassing negative epistasis on yield in tomato imposed by a domestication gene.</title>
        <authorList>
            <person name="Soyk S."/>
            <person name="Lemmon Z.H."/>
            <person name="Oved M."/>
            <person name="Fisher J."/>
            <person name="Liberatore K.L."/>
            <person name="Park S.J."/>
            <person name="Goren A."/>
            <person name="Jiang K."/>
            <person name="Ramos A."/>
            <person name="van der Knaap E."/>
            <person name="Van Eck J."/>
            <person name="Zamir D."/>
            <person name="Eshed Y."/>
            <person name="Lippman Z.B."/>
        </authorList>
    </citation>
    <scope>FUNCTION</scope>
    <scope>BIOTECHNOLOGY</scope>
</reference>
<accession>K4DEK0</accession>
<keyword id="KW-0238">DNA-binding</keyword>
<keyword id="KW-0539">Nucleus</keyword>
<keyword id="KW-1185">Reference proteome</keyword>
<keyword id="KW-0804">Transcription</keyword>
<keyword id="KW-0805">Transcription regulation</keyword>
<dbReference type="EMBL" id="KF718834">
    <property type="protein sequence ID" value="AHB86542.1"/>
    <property type="molecule type" value="mRNA"/>
</dbReference>
<dbReference type="RefSeq" id="NP_001275579.1">
    <property type="nucleotide sequence ID" value="NM_001288650.1"/>
</dbReference>
<dbReference type="SMR" id="K4DEK0"/>
<dbReference type="STRING" id="4081.K4DEK0"/>
<dbReference type="PaxDb" id="4081-Solyc12g038510.1.1"/>
<dbReference type="EnsemblPlants" id="Solyc12g038510.2.1">
    <property type="protein sequence ID" value="Solyc12g038510.2.1"/>
    <property type="gene ID" value="Solyc12g038510.2"/>
</dbReference>
<dbReference type="GeneID" id="101263981"/>
<dbReference type="Gramene" id="Solyc12g038510.2.1">
    <property type="protein sequence ID" value="Solyc12g038510.2.1"/>
    <property type="gene ID" value="Solyc12g038510.2"/>
</dbReference>
<dbReference type="KEGG" id="sly:101263981"/>
<dbReference type="eggNOG" id="KOG0014">
    <property type="taxonomic scope" value="Eukaryota"/>
</dbReference>
<dbReference type="HOGENOM" id="CLU_053053_0_2_1"/>
<dbReference type="InParanoid" id="K4DEK0"/>
<dbReference type="OMA" id="MGANDHE"/>
<dbReference type="OrthoDB" id="1898716at2759"/>
<dbReference type="PhylomeDB" id="K4DEK0"/>
<dbReference type="Proteomes" id="UP000004994">
    <property type="component" value="Chromosome 12"/>
</dbReference>
<dbReference type="GO" id="GO:0005634">
    <property type="term" value="C:nucleus"/>
    <property type="evidence" value="ECO:0007669"/>
    <property type="project" value="UniProtKB-SubCell"/>
</dbReference>
<dbReference type="GO" id="GO:0000981">
    <property type="term" value="F:DNA-binding transcription factor activity, RNA polymerase II-specific"/>
    <property type="evidence" value="ECO:0000318"/>
    <property type="project" value="GO_Central"/>
</dbReference>
<dbReference type="GO" id="GO:0046983">
    <property type="term" value="F:protein dimerization activity"/>
    <property type="evidence" value="ECO:0007669"/>
    <property type="project" value="InterPro"/>
</dbReference>
<dbReference type="GO" id="GO:0000978">
    <property type="term" value="F:RNA polymerase II cis-regulatory region sequence-specific DNA binding"/>
    <property type="evidence" value="ECO:0000318"/>
    <property type="project" value="GO_Central"/>
</dbReference>
<dbReference type="GO" id="GO:0045944">
    <property type="term" value="P:positive regulation of transcription by RNA polymerase II"/>
    <property type="evidence" value="ECO:0007669"/>
    <property type="project" value="InterPro"/>
</dbReference>
<dbReference type="GO" id="GO:0006357">
    <property type="term" value="P:regulation of transcription by RNA polymerase II"/>
    <property type="evidence" value="ECO:0000318"/>
    <property type="project" value="GO_Central"/>
</dbReference>
<dbReference type="CDD" id="cd00265">
    <property type="entry name" value="MADS_MEF2_like"/>
    <property type="match status" value="1"/>
</dbReference>
<dbReference type="FunFam" id="3.40.1810.10:FF:000004">
    <property type="entry name" value="MADS-box transcription factor 1"/>
    <property type="match status" value="1"/>
</dbReference>
<dbReference type="Gene3D" id="3.40.1810.10">
    <property type="entry name" value="Transcription factor, MADS-box"/>
    <property type="match status" value="1"/>
</dbReference>
<dbReference type="InterPro" id="IPR050142">
    <property type="entry name" value="MADS-box/MEF2_TF"/>
</dbReference>
<dbReference type="InterPro" id="IPR033896">
    <property type="entry name" value="MEF2-like_N"/>
</dbReference>
<dbReference type="InterPro" id="IPR002487">
    <property type="entry name" value="TF_Kbox"/>
</dbReference>
<dbReference type="InterPro" id="IPR002100">
    <property type="entry name" value="TF_MADSbox"/>
</dbReference>
<dbReference type="InterPro" id="IPR036879">
    <property type="entry name" value="TF_MADSbox_sf"/>
</dbReference>
<dbReference type="PANTHER" id="PTHR48019">
    <property type="entry name" value="SERUM RESPONSE FACTOR HOMOLOG"/>
    <property type="match status" value="1"/>
</dbReference>
<dbReference type="Pfam" id="PF01486">
    <property type="entry name" value="K-box"/>
    <property type="match status" value="1"/>
</dbReference>
<dbReference type="Pfam" id="PF00319">
    <property type="entry name" value="SRF-TF"/>
    <property type="match status" value="1"/>
</dbReference>
<dbReference type="PRINTS" id="PR00404">
    <property type="entry name" value="MADSDOMAIN"/>
</dbReference>
<dbReference type="SMART" id="SM00432">
    <property type="entry name" value="MADS"/>
    <property type="match status" value="1"/>
</dbReference>
<dbReference type="SUPFAM" id="SSF55455">
    <property type="entry name" value="SRF-like"/>
    <property type="match status" value="1"/>
</dbReference>
<dbReference type="PROSITE" id="PS51297">
    <property type="entry name" value="K_BOX"/>
    <property type="match status" value="1"/>
</dbReference>
<dbReference type="PROSITE" id="PS00350">
    <property type="entry name" value="MADS_BOX_1"/>
    <property type="match status" value="1"/>
</dbReference>
<dbReference type="PROSITE" id="PS50066">
    <property type="entry name" value="MADS_BOX_2"/>
    <property type="match status" value="1"/>
</dbReference>
<name>J2_SOLLC</name>
<evidence type="ECO:0000255" key="1">
    <source>
        <dbReference type="PROSITE-ProRule" id="PRU00251"/>
    </source>
</evidence>
<evidence type="ECO:0000255" key="2">
    <source>
        <dbReference type="PROSITE-ProRule" id="PRU00629"/>
    </source>
</evidence>
<evidence type="ECO:0000269" key="3">
    <source>
    </source>
</evidence>
<evidence type="ECO:0000303" key="4">
    <source>
    </source>
</evidence>
<evidence type="ECO:0000305" key="5"/>
<evidence type="ECO:0000312" key="6">
    <source>
        <dbReference type="EMBL" id="AHB86542.1"/>
    </source>
</evidence>